<dbReference type="EC" id="4.1.2.25"/>
<dbReference type="EMBL" id="BA000034">
    <property type="protein sequence ID" value="BAC64056.1"/>
    <property type="molecule type" value="Genomic_DNA"/>
</dbReference>
<dbReference type="RefSeq" id="WP_011054469.1">
    <property type="nucleotide sequence ID" value="NC_004606.1"/>
</dbReference>
<dbReference type="SMR" id="P0DB13"/>
<dbReference type="KEGG" id="sps:SPs0961"/>
<dbReference type="HOGENOM" id="CLU_112632_1_3_9"/>
<dbReference type="UniPathway" id="UPA00077">
    <property type="reaction ID" value="UER00154"/>
</dbReference>
<dbReference type="GO" id="GO:0005737">
    <property type="term" value="C:cytoplasm"/>
    <property type="evidence" value="ECO:0007669"/>
    <property type="project" value="TreeGrafter"/>
</dbReference>
<dbReference type="GO" id="GO:0004150">
    <property type="term" value="F:dihydroneopterin aldolase activity"/>
    <property type="evidence" value="ECO:0007669"/>
    <property type="project" value="UniProtKB-EC"/>
</dbReference>
<dbReference type="GO" id="GO:0046656">
    <property type="term" value="P:folic acid biosynthetic process"/>
    <property type="evidence" value="ECO:0007669"/>
    <property type="project" value="UniProtKB-KW"/>
</dbReference>
<dbReference type="GO" id="GO:0046654">
    <property type="term" value="P:tetrahydrofolate biosynthetic process"/>
    <property type="evidence" value="ECO:0007669"/>
    <property type="project" value="UniProtKB-UniPathway"/>
</dbReference>
<dbReference type="CDD" id="cd00534">
    <property type="entry name" value="DHNA_DHNTPE"/>
    <property type="match status" value="1"/>
</dbReference>
<dbReference type="FunFam" id="3.30.1130.10:FF:000003">
    <property type="entry name" value="7,8-dihydroneopterin aldolase"/>
    <property type="match status" value="1"/>
</dbReference>
<dbReference type="Gene3D" id="3.30.1130.10">
    <property type="match status" value="1"/>
</dbReference>
<dbReference type="InterPro" id="IPR006156">
    <property type="entry name" value="Dihydroneopterin_aldolase"/>
</dbReference>
<dbReference type="InterPro" id="IPR006157">
    <property type="entry name" value="FolB_dom"/>
</dbReference>
<dbReference type="InterPro" id="IPR043133">
    <property type="entry name" value="GTP-CH-I_C/QueF"/>
</dbReference>
<dbReference type="NCBIfam" id="TIGR00525">
    <property type="entry name" value="folB"/>
    <property type="match status" value="1"/>
</dbReference>
<dbReference type="NCBIfam" id="TIGR00526">
    <property type="entry name" value="folB_dom"/>
    <property type="match status" value="1"/>
</dbReference>
<dbReference type="PANTHER" id="PTHR42844">
    <property type="entry name" value="DIHYDRONEOPTERIN ALDOLASE 1-RELATED"/>
    <property type="match status" value="1"/>
</dbReference>
<dbReference type="PANTHER" id="PTHR42844:SF1">
    <property type="entry name" value="DIHYDRONEOPTERIN ALDOLASE 1-RELATED"/>
    <property type="match status" value="1"/>
</dbReference>
<dbReference type="Pfam" id="PF02152">
    <property type="entry name" value="FolB"/>
    <property type="match status" value="1"/>
</dbReference>
<dbReference type="SMART" id="SM00905">
    <property type="entry name" value="FolB"/>
    <property type="match status" value="1"/>
</dbReference>
<dbReference type="SUPFAM" id="SSF55620">
    <property type="entry name" value="Tetrahydrobiopterin biosynthesis enzymes-like"/>
    <property type="match status" value="1"/>
</dbReference>
<proteinExistence type="inferred from homology"/>
<name>FOLB_STRPQ</name>
<protein>
    <recommendedName>
        <fullName>Dihydroneopterin aldolase</fullName>
        <shortName>DHNA</shortName>
        <ecNumber>4.1.2.25</ecNumber>
    </recommendedName>
    <alternativeName>
        <fullName>7,8-dihydroneopterin aldolase</fullName>
    </alternativeName>
</protein>
<reference key="1">
    <citation type="journal article" date="2003" name="Genome Res.">
        <title>Genome sequence of an M3 strain of Streptococcus pyogenes reveals a large-scale genomic rearrangement in invasive strains and new insights into phage evolution.</title>
        <authorList>
            <person name="Nakagawa I."/>
            <person name="Kurokawa K."/>
            <person name="Yamashita A."/>
            <person name="Nakata M."/>
            <person name="Tomiyasu Y."/>
            <person name="Okahashi N."/>
            <person name="Kawabata S."/>
            <person name="Yamazaki K."/>
            <person name="Shiba T."/>
            <person name="Yasunaga T."/>
            <person name="Hayashi H."/>
            <person name="Hattori M."/>
            <person name="Hamada S."/>
        </authorList>
    </citation>
    <scope>NUCLEOTIDE SEQUENCE [LARGE SCALE GENOMIC DNA]</scope>
    <source>
        <strain>SSI-1</strain>
    </source>
</reference>
<sequence>MDKIVLEGCRFYGYHGAFKEEQTLGQIFLVDLELSVDLQAASLSDQLTDTVHYGIVFDSVRQLVEGGKFILIERLAGAICEQLFNEFPPIEAIKVAIKKENPPIAGHYKAVGIELERQR</sequence>
<evidence type="ECO:0000250" key="1">
    <source>
        <dbReference type="UniProtKB" id="P0AC16"/>
    </source>
</evidence>
<evidence type="ECO:0000305" key="2"/>
<gene>
    <name type="primary">folB</name>
    <name type="synonym">folQ</name>
    <name type="ordered locus">SPs0961</name>
</gene>
<organism>
    <name type="scientific">Streptococcus pyogenes serotype M3 (strain SSI-1)</name>
    <dbReference type="NCBI Taxonomy" id="193567"/>
    <lineage>
        <taxon>Bacteria</taxon>
        <taxon>Bacillati</taxon>
        <taxon>Bacillota</taxon>
        <taxon>Bacilli</taxon>
        <taxon>Lactobacillales</taxon>
        <taxon>Streptococcaceae</taxon>
        <taxon>Streptococcus</taxon>
    </lineage>
</organism>
<accession>P0DB13</accession>
<accession>Q8K7K7</accession>
<keyword id="KW-0289">Folate biosynthesis</keyword>
<keyword id="KW-0456">Lyase</keyword>
<comment type="function">
    <text evidence="1">Catalyzes the conversion of 7,8-dihydroneopterin to 6-hydroxymethyl-7,8-dihydropterin.</text>
</comment>
<comment type="catalytic activity">
    <reaction evidence="1">
        <text>7,8-dihydroneopterin = 6-hydroxymethyl-7,8-dihydropterin + glycolaldehyde</text>
        <dbReference type="Rhea" id="RHEA:10540"/>
        <dbReference type="ChEBI" id="CHEBI:17001"/>
        <dbReference type="ChEBI" id="CHEBI:17071"/>
        <dbReference type="ChEBI" id="CHEBI:44841"/>
        <dbReference type="EC" id="4.1.2.25"/>
    </reaction>
</comment>
<comment type="pathway">
    <text>Cofactor biosynthesis; tetrahydrofolate biosynthesis; 2-amino-4-hydroxy-6-hydroxymethyl-7,8-dihydropteridine diphosphate from 7,8-dihydroneopterin triphosphate: step 3/4.</text>
</comment>
<comment type="similarity">
    <text evidence="2">Belongs to the DHNA family.</text>
</comment>
<feature type="chain" id="PRO_0000411344" description="Dihydroneopterin aldolase">
    <location>
        <begin position="1"/>
        <end position="119"/>
    </location>
</feature>
<feature type="active site" description="Proton donor/acceptor" evidence="1">
    <location>
        <position position="99"/>
    </location>
</feature>
<feature type="binding site" evidence="1">
    <location>
        <position position="21"/>
    </location>
    <ligand>
        <name>substrate</name>
    </ligand>
</feature>
<feature type="binding site" evidence="1">
    <location>
        <position position="53"/>
    </location>
    <ligand>
        <name>substrate</name>
    </ligand>
</feature>
<feature type="binding site" evidence="1">
    <location>
        <begin position="72"/>
        <end position="73"/>
    </location>
    <ligand>
        <name>substrate</name>
    </ligand>
</feature>